<dbReference type="EC" id="5.1.1.7" evidence="1"/>
<dbReference type="EMBL" id="BA000022">
    <property type="protein sequence ID" value="BAA18785.1"/>
    <property type="molecule type" value="Genomic_DNA"/>
</dbReference>
<dbReference type="PIR" id="S76873">
    <property type="entry name" value="S76873"/>
</dbReference>
<dbReference type="SMR" id="P74667"/>
<dbReference type="FunCoup" id="P74667">
    <property type="interactions" value="477"/>
</dbReference>
<dbReference type="STRING" id="1148.gene:10500557"/>
<dbReference type="PaxDb" id="1148-1653875"/>
<dbReference type="EnsemblBacteria" id="BAA18785">
    <property type="protein sequence ID" value="BAA18785"/>
    <property type="gene ID" value="BAA18785"/>
</dbReference>
<dbReference type="KEGG" id="syn:slr1665"/>
<dbReference type="eggNOG" id="COG0253">
    <property type="taxonomic scope" value="Bacteria"/>
</dbReference>
<dbReference type="InParanoid" id="P74667"/>
<dbReference type="PhylomeDB" id="P74667"/>
<dbReference type="UniPathway" id="UPA00034">
    <property type="reaction ID" value="UER00025"/>
</dbReference>
<dbReference type="Proteomes" id="UP000001425">
    <property type="component" value="Chromosome"/>
</dbReference>
<dbReference type="GO" id="GO:0005829">
    <property type="term" value="C:cytosol"/>
    <property type="evidence" value="ECO:0000318"/>
    <property type="project" value="GO_Central"/>
</dbReference>
<dbReference type="GO" id="GO:0008837">
    <property type="term" value="F:diaminopimelate epimerase activity"/>
    <property type="evidence" value="ECO:0000318"/>
    <property type="project" value="GO_Central"/>
</dbReference>
<dbReference type="GO" id="GO:0009089">
    <property type="term" value="P:lysine biosynthetic process via diaminopimelate"/>
    <property type="evidence" value="ECO:0000318"/>
    <property type="project" value="GO_Central"/>
</dbReference>
<dbReference type="FunFam" id="3.10.310.10:FF:000009">
    <property type="entry name" value="Diaminopimelate epimerase chloroplastic"/>
    <property type="match status" value="1"/>
</dbReference>
<dbReference type="FunFam" id="3.10.310.10:FF:000011">
    <property type="entry name" value="Diaminopimelate epimerase, chloroplastic"/>
    <property type="match status" value="1"/>
</dbReference>
<dbReference type="Gene3D" id="3.10.310.10">
    <property type="entry name" value="Diaminopimelate Epimerase, Chain A, domain 1"/>
    <property type="match status" value="2"/>
</dbReference>
<dbReference type="HAMAP" id="MF_00197">
    <property type="entry name" value="DAP_epimerase"/>
    <property type="match status" value="1"/>
</dbReference>
<dbReference type="InterPro" id="IPR018510">
    <property type="entry name" value="DAP_epimerase_AS"/>
</dbReference>
<dbReference type="InterPro" id="IPR001653">
    <property type="entry name" value="DAP_epimerase_DapF"/>
</dbReference>
<dbReference type="NCBIfam" id="TIGR00652">
    <property type="entry name" value="DapF"/>
    <property type="match status" value="1"/>
</dbReference>
<dbReference type="PANTHER" id="PTHR31689:SF0">
    <property type="entry name" value="DIAMINOPIMELATE EPIMERASE"/>
    <property type="match status" value="1"/>
</dbReference>
<dbReference type="PANTHER" id="PTHR31689">
    <property type="entry name" value="DIAMINOPIMELATE EPIMERASE, CHLOROPLASTIC"/>
    <property type="match status" value="1"/>
</dbReference>
<dbReference type="Pfam" id="PF01678">
    <property type="entry name" value="DAP_epimerase"/>
    <property type="match status" value="2"/>
</dbReference>
<dbReference type="SUPFAM" id="SSF54506">
    <property type="entry name" value="Diaminopimelate epimerase-like"/>
    <property type="match status" value="2"/>
</dbReference>
<dbReference type="PROSITE" id="PS01326">
    <property type="entry name" value="DAP_EPIMERASE"/>
    <property type="match status" value="1"/>
</dbReference>
<protein>
    <recommendedName>
        <fullName evidence="1">Diaminopimelate epimerase</fullName>
        <shortName evidence="1">DAP epimerase</shortName>
        <ecNumber evidence="1">5.1.1.7</ecNumber>
    </recommendedName>
    <alternativeName>
        <fullName evidence="1">PLP-independent amino acid racemase</fullName>
    </alternativeName>
</protein>
<keyword id="KW-0028">Amino-acid biosynthesis</keyword>
<keyword id="KW-0963">Cytoplasm</keyword>
<keyword id="KW-0413">Isomerase</keyword>
<keyword id="KW-0457">Lysine biosynthesis</keyword>
<keyword id="KW-1185">Reference proteome</keyword>
<reference key="1">
    <citation type="journal article" date="1996" name="DNA Res.">
        <title>Sequence analysis of the genome of the unicellular cyanobacterium Synechocystis sp. strain PCC6803. II. Sequence determination of the entire genome and assignment of potential protein-coding regions.</title>
        <authorList>
            <person name="Kaneko T."/>
            <person name="Sato S."/>
            <person name="Kotani H."/>
            <person name="Tanaka A."/>
            <person name="Asamizu E."/>
            <person name="Nakamura Y."/>
            <person name="Miyajima N."/>
            <person name="Hirosawa M."/>
            <person name="Sugiura M."/>
            <person name="Sasamoto S."/>
            <person name="Kimura T."/>
            <person name="Hosouchi T."/>
            <person name="Matsuno A."/>
            <person name="Muraki A."/>
            <person name="Nakazaki N."/>
            <person name="Naruo K."/>
            <person name="Okumura S."/>
            <person name="Shimpo S."/>
            <person name="Takeuchi C."/>
            <person name="Wada T."/>
            <person name="Watanabe A."/>
            <person name="Yamada M."/>
            <person name="Yasuda M."/>
            <person name="Tabata S."/>
        </authorList>
    </citation>
    <scope>NUCLEOTIDE SEQUENCE [LARGE SCALE GENOMIC DNA]</scope>
    <source>
        <strain>ATCC 27184 / PCC 6803 / Kazusa</strain>
    </source>
</reference>
<proteinExistence type="inferred from homology"/>
<feature type="chain" id="PRO_0000149873" description="Diaminopimelate epimerase">
    <location>
        <begin position="1"/>
        <end position="279"/>
    </location>
</feature>
<feature type="active site" description="Proton donor" evidence="1">
    <location>
        <position position="75"/>
    </location>
</feature>
<feature type="active site" description="Proton acceptor" evidence="1">
    <location>
        <position position="222"/>
    </location>
</feature>
<feature type="binding site" evidence="1">
    <location>
        <position position="13"/>
    </location>
    <ligand>
        <name>substrate</name>
    </ligand>
</feature>
<feature type="binding site" evidence="1">
    <location>
        <position position="66"/>
    </location>
    <ligand>
        <name>substrate</name>
    </ligand>
</feature>
<feature type="binding site" evidence="1">
    <location>
        <begin position="76"/>
        <end position="77"/>
    </location>
    <ligand>
        <name>substrate</name>
    </ligand>
</feature>
<feature type="binding site" evidence="1">
    <location>
        <position position="162"/>
    </location>
    <ligand>
        <name>substrate</name>
    </ligand>
</feature>
<feature type="binding site" evidence="1">
    <location>
        <position position="195"/>
    </location>
    <ligand>
        <name>substrate</name>
    </ligand>
</feature>
<feature type="binding site" evidence="1">
    <location>
        <begin position="213"/>
        <end position="214"/>
    </location>
    <ligand>
        <name>substrate</name>
    </ligand>
</feature>
<feature type="binding site" evidence="1">
    <location>
        <begin position="223"/>
        <end position="224"/>
    </location>
    <ligand>
        <name>substrate</name>
    </ligand>
</feature>
<feature type="site" description="Could be important to modulate the pK values of the two catalytic cysteine residues" evidence="1">
    <location>
        <position position="164"/>
    </location>
</feature>
<feature type="site" description="Could be important to modulate the pK values of the two catalytic cysteine residues" evidence="1">
    <location>
        <position position="213"/>
    </location>
</feature>
<evidence type="ECO:0000255" key="1">
    <source>
        <dbReference type="HAMAP-Rule" id="MF_00197"/>
    </source>
</evidence>
<organism>
    <name type="scientific">Synechocystis sp. (strain ATCC 27184 / PCC 6803 / Kazusa)</name>
    <dbReference type="NCBI Taxonomy" id="1111708"/>
    <lineage>
        <taxon>Bacteria</taxon>
        <taxon>Bacillati</taxon>
        <taxon>Cyanobacteriota</taxon>
        <taxon>Cyanophyceae</taxon>
        <taxon>Synechococcales</taxon>
        <taxon>Merismopediaceae</taxon>
        <taxon>Synechocystis</taxon>
    </lineage>
</organism>
<comment type="function">
    <text evidence="1">Catalyzes the stereoinversion of LL-2,6-diaminopimelate (L,L-DAP) to meso-diaminopimelate (meso-DAP), a precursor of L-lysine and an essential component of the bacterial peptidoglycan.</text>
</comment>
<comment type="catalytic activity">
    <reaction evidence="1">
        <text>(2S,6S)-2,6-diaminopimelate = meso-2,6-diaminopimelate</text>
        <dbReference type="Rhea" id="RHEA:15393"/>
        <dbReference type="ChEBI" id="CHEBI:57609"/>
        <dbReference type="ChEBI" id="CHEBI:57791"/>
        <dbReference type="EC" id="5.1.1.7"/>
    </reaction>
</comment>
<comment type="pathway">
    <text evidence="1">Amino-acid biosynthesis; L-lysine biosynthesis via DAP pathway; DL-2,6-diaminopimelate from LL-2,6-diaminopimelate: step 1/1.</text>
</comment>
<comment type="subunit">
    <text evidence="1">Homodimer.</text>
</comment>
<comment type="subcellular location">
    <subcellularLocation>
        <location evidence="1">Cytoplasm</location>
    </subcellularLocation>
</comment>
<comment type="similarity">
    <text evidence="1">Belongs to the diaminopimelate epimerase family.</text>
</comment>
<sequence length="279" mass="30096">MALSFSKYHGLGNDFILVDNRQSTEPCLTPDQAQQLCDRHFGIGADGVIFALPGQGGTDYTMRIFNSDGSEPEMCGNGIRCLAKFLADLEGVEEKTYRIHTLAGVITPQLLADGQVKVDMGEPQLLAELIPTTLAPAGEKVVDLPLAVAGQTWAVTCVSMGNPHCLTFVDDVDSLNLTEIGPLFEHHPQFSQRTNTEFIQVLGSDRLKMRVWERGAGITLACGTGACATVVAAVLTGRGDRRCTVELPGGNLEIEWSAQDNRLYMTGPAQRVFSGQAEI</sequence>
<accession>P74667</accession>
<gene>
    <name evidence="1" type="primary">dapF</name>
    <name type="ordered locus">slr1665</name>
</gene>
<name>DAPF_SYNY3</name>